<dbReference type="EC" id="2.7.7.4" evidence="1"/>
<dbReference type="EMBL" id="CP000478">
    <property type="protein sequence ID" value="ABK16740.1"/>
    <property type="molecule type" value="Genomic_DNA"/>
</dbReference>
<dbReference type="RefSeq" id="WP_011697911.1">
    <property type="nucleotide sequence ID" value="NC_008554.1"/>
</dbReference>
<dbReference type="SMR" id="A0LH38"/>
<dbReference type="STRING" id="335543.Sfum_1046"/>
<dbReference type="KEGG" id="sfu:Sfum_1046"/>
<dbReference type="eggNOG" id="COG2046">
    <property type="taxonomic scope" value="Bacteria"/>
</dbReference>
<dbReference type="HOGENOM" id="CLU_022950_1_1_7"/>
<dbReference type="InParanoid" id="A0LH38"/>
<dbReference type="OrthoDB" id="9804504at2"/>
<dbReference type="UniPathway" id="UPA00140">
    <property type="reaction ID" value="UER00204"/>
</dbReference>
<dbReference type="Proteomes" id="UP000001784">
    <property type="component" value="Chromosome"/>
</dbReference>
<dbReference type="GO" id="GO:0005524">
    <property type="term" value="F:ATP binding"/>
    <property type="evidence" value="ECO:0007669"/>
    <property type="project" value="UniProtKB-KW"/>
</dbReference>
<dbReference type="GO" id="GO:0004781">
    <property type="term" value="F:sulfate adenylyltransferase (ATP) activity"/>
    <property type="evidence" value="ECO:0007669"/>
    <property type="project" value="UniProtKB-UniRule"/>
</dbReference>
<dbReference type="GO" id="GO:0070814">
    <property type="term" value="P:hydrogen sulfide biosynthetic process"/>
    <property type="evidence" value="ECO:0007669"/>
    <property type="project" value="UniProtKB-UniRule"/>
</dbReference>
<dbReference type="GO" id="GO:0000103">
    <property type="term" value="P:sulfate assimilation"/>
    <property type="evidence" value="ECO:0007669"/>
    <property type="project" value="UniProtKB-UniRule"/>
</dbReference>
<dbReference type="CDD" id="cd00517">
    <property type="entry name" value="ATPS"/>
    <property type="match status" value="1"/>
</dbReference>
<dbReference type="Gene3D" id="3.40.50.620">
    <property type="entry name" value="HUPs"/>
    <property type="match status" value="1"/>
</dbReference>
<dbReference type="Gene3D" id="3.10.400.10">
    <property type="entry name" value="Sulfate adenylyltransferase"/>
    <property type="match status" value="1"/>
</dbReference>
<dbReference type="HAMAP" id="MF_00066">
    <property type="entry name" value="Sulf_adenylyltr"/>
    <property type="match status" value="1"/>
</dbReference>
<dbReference type="InterPro" id="IPR025980">
    <property type="entry name" value="ATP-Sase_PUA-like_dom"/>
</dbReference>
<dbReference type="InterPro" id="IPR015947">
    <property type="entry name" value="PUA-like_sf"/>
</dbReference>
<dbReference type="InterPro" id="IPR014729">
    <property type="entry name" value="Rossmann-like_a/b/a_fold"/>
</dbReference>
<dbReference type="InterPro" id="IPR020792">
    <property type="entry name" value="SO4_adenylyltransferase_pro"/>
</dbReference>
<dbReference type="InterPro" id="IPR024951">
    <property type="entry name" value="Sulfurylase_cat_dom"/>
</dbReference>
<dbReference type="InterPro" id="IPR002650">
    <property type="entry name" value="Sulphate_adenylyltransferase"/>
</dbReference>
<dbReference type="NCBIfam" id="NF003166">
    <property type="entry name" value="PRK04149.1"/>
    <property type="match status" value="1"/>
</dbReference>
<dbReference type="NCBIfam" id="TIGR00339">
    <property type="entry name" value="sopT"/>
    <property type="match status" value="1"/>
</dbReference>
<dbReference type="PANTHER" id="PTHR43509">
    <property type="match status" value="1"/>
</dbReference>
<dbReference type="PANTHER" id="PTHR43509:SF1">
    <property type="entry name" value="SULFATE ADENYLYLTRANSFERASE"/>
    <property type="match status" value="1"/>
</dbReference>
<dbReference type="Pfam" id="PF01747">
    <property type="entry name" value="ATP-sulfurylase"/>
    <property type="match status" value="1"/>
</dbReference>
<dbReference type="Pfam" id="PF14306">
    <property type="entry name" value="PUA_2"/>
    <property type="match status" value="1"/>
</dbReference>
<dbReference type="SUPFAM" id="SSF52374">
    <property type="entry name" value="Nucleotidylyl transferase"/>
    <property type="match status" value="1"/>
</dbReference>
<dbReference type="SUPFAM" id="SSF88697">
    <property type="entry name" value="PUA domain-like"/>
    <property type="match status" value="1"/>
</dbReference>
<keyword id="KW-0067">ATP-binding</keyword>
<keyword id="KW-0547">Nucleotide-binding</keyword>
<keyword id="KW-0548">Nucleotidyltransferase</keyword>
<keyword id="KW-1185">Reference proteome</keyword>
<keyword id="KW-0808">Transferase</keyword>
<comment type="catalytic activity">
    <reaction evidence="1">
        <text>sulfate + ATP + H(+) = adenosine 5'-phosphosulfate + diphosphate</text>
        <dbReference type="Rhea" id="RHEA:18133"/>
        <dbReference type="ChEBI" id="CHEBI:15378"/>
        <dbReference type="ChEBI" id="CHEBI:16189"/>
        <dbReference type="ChEBI" id="CHEBI:30616"/>
        <dbReference type="ChEBI" id="CHEBI:33019"/>
        <dbReference type="ChEBI" id="CHEBI:58243"/>
        <dbReference type="EC" id="2.7.7.4"/>
    </reaction>
</comment>
<comment type="pathway">
    <text evidence="1">Sulfur metabolism; hydrogen sulfide biosynthesis; sulfite from sulfate: step 1/3.</text>
</comment>
<comment type="similarity">
    <text evidence="1">Belongs to the sulfate adenylyltransferase family.</text>
</comment>
<sequence length="410" mass="45491">MSKLVPPHGKEKKLKPLLLEGAALAAEKEKAKTLKVVPMTSREASDLIMLGIGAFTPLDGFMGYADWKGVCDKYTMADGVFWPIPITLSADKAVADSIGKNEEVALLDVENNEILGTMKVTEKYTIDKEHECKSVFWTNDAAGHPGVAKVMAQKEVNLAGPVKVISESFYPTQFKNVYQRPAEARKLFDEKGWRRVAALQLRNPMHRSHEFLAKIAVEVMDGLYIHQLVGKLKEGDIPADVRVKAIDVLVENYFVKDTVIQGGYPAEMRYAGPREALLHAVFRQNYGCSHLIVGRDHAGVGDYYGPFDAQKIFDDIPEGALLLQPLKIDWTFHCFKCGGMASMRTCPHGKADRLLLSGTMVRKTLSEGGELPKEFSRPEVVKVLQEYYAGLEEKVEIKLHGAATGDVKKK</sequence>
<name>SAT_SYNFM</name>
<proteinExistence type="inferred from homology"/>
<organism>
    <name type="scientific">Syntrophobacter fumaroxidans (strain DSM 10017 / MPOB)</name>
    <dbReference type="NCBI Taxonomy" id="335543"/>
    <lineage>
        <taxon>Bacteria</taxon>
        <taxon>Pseudomonadati</taxon>
        <taxon>Thermodesulfobacteriota</taxon>
        <taxon>Syntrophobacteria</taxon>
        <taxon>Syntrophobacterales</taxon>
        <taxon>Syntrophobacteraceae</taxon>
        <taxon>Syntrophobacter</taxon>
    </lineage>
</organism>
<accession>A0LH38</accession>
<reference key="1">
    <citation type="submission" date="2006-10" db="EMBL/GenBank/DDBJ databases">
        <title>Complete sequence of Syntrophobacter fumaroxidans MPOB.</title>
        <authorList>
            <consortium name="US DOE Joint Genome Institute"/>
            <person name="Copeland A."/>
            <person name="Lucas S."/>
            <person name="Lapidus A."/>
            <person name="Barry K."/>
            <person name="Detter J.C."/>
            <person name="Glavina del Rio T."/>
            <person name="Hammon N."/>
            <person name="Israni S."/>
            <person name="Pitluck S."/>
            <person name="Goltsman E.G."/>
            <person name="Martinez M."/>
            <person name="Schmutz J."/>
            <person name="Larimer F."/>
            <person name="Land M."/>
            <person name="Hauser L."/>
            <person name="Kyrpides N."/>
            <person name="Kim E."/>
            <person name="Boone D.R."/>
            <person name="Brockman F."/>
            <person name="Culley D."/>
            <person name="Ferry J."/>
            <person name="Gunsalus R."/>
            <person name="McInerney M.J."/>
            <person name="Morrison M."/>
            <person name="Plugge C."/>
            <person name="Rohlin L."/>
            <person name="Scholten J."/>
            <person name="Sieber J."/>
            <person name="Stams A.J.M."/>
            <person name="Worm P."/>
            <person name="Henstra A.M."/>
            <person name="Richardson P."/>
        </authorList>
    </citation>
    <scope>NUCLEOTIDE SEQUENCE [LARGE SCALE GENOMIC DNA]</scope>
    <source>
        <strain>DSM 10017 / MPOB</strain>
    </source>
</reference>
<protein>
    <recommendedName>
        <fullName evidence="1">Sulfate adenylyltransferase</fullName>
        <ecNumber evidence="1">2.7.7.4</ecNumber>
    </recommendedName>
    <alternativeName>
        <fullName evidence="1">ATP-sulfurylase</fullName>
    </alternativeName>
    <alternativeName>
        <fullName evidence="1">Sulfate adenylate transferase</fullName>
        <shortName evidence="1">SAT</shortName>
    </alternativeName>
</protein>
<gene>
    <name evidence="1" type="primary">sat</name>
    <name type="ordered locus">Sfum_1046</name>
</gene>
<evidence type="ECO:0000255" key="1">
    <source>
        <dbReference type="HAMAP-Rule" id="MF_00066"/>
    </source>
</evidence>
<feature type="chain" id="PRO_0000340637" description="Sulfate adenylyltransferase">
    <location>
        <begin position="1"/>
        <end position="410"/>
    </location>
</feature>